<organism>
    <name type="scientific">Enterococcus faecalis (strain ATCC 700802 / V583)</name>
    <dbReference type="NCBI Taxonomy" id="226185"/>
    <lineage>
        <taxon>Bacteria</taxon>
        <taxon>Bacillati</taxon>
        <taxon>Bacillota</taxon>
        <taxon>Bacilli</taxon>
        <taxon>Lactobacillales</taxon>
        <taxon>Enterococcaceae</taxon>
        <taxon>Enterococcus</taxon>
    </lineage>
</organism>
<sequence length="61" mass="7154">MAKKSMIAKNKRPAKHSTQAYTRCERCGRPHSVYRKFHLCRICFRELAYKGQIPGVKKASW</sequence>
<comment type="function">
    <text evidence="1">Binds 16S rRNA, required for the assembly of 30S particles and may also be responsible for determining the conformation of the 16S rRNA at the A site.</text>
</comment>
<comment type="cofactor">
    <cofactor evidence="1">
        <name>Zn(2+)</name>
        <dbReference type="ChEBI" id="CHEBI:29105"/>
    </cofactor>
    <text evidence="1">Binds 1 zinc ion per subunit.</text>
</comment>
<comment type="subunit">
    <text evidence="1">Part of the 30S ribosomal subunit. Contacts proteins S3 and S10.</text>
</comment>
<comment type="similarity">
    <text evidence="1">Belongs to the universal ribosomal protein uS14 family. Zinc-binding uS14 subfamily.</text>
</comment>
<protein>
    <recommendedName>
        <fullName evidence="1">Small ribosomal subunit protein uS14C</fullName>
    </recommendedName>
    <alternativeName>
        <fullName evidence="2">30S ribosomal protein S14 type Z</fullName>
    </alternativeName>
</protein>
<accession>Q839F1</accession>
<feature type="chain" id="PRO_0000269100" description="Small ribosomal subunit protein uS14C">
    <location>
        <begin position="1"/>
        <end position="61"/>
    </location>
</feature>
<feature type="binding site" evidence="1">
    <location>
        <position position="24"/>
    </location>
    <ligand>
        <name>Zn(2+)</name>
        <dbReference type="ChEBI" id="CHEBI:29105"/>
    </ligand>
</feature>
<feature type="binding site" evidence="1">
    <location>
        <position position="27"/>
    </location>
    <ligand>
        <name>Zn(2+)</name>
        <dbReference type="ChEBI" id="CHEBI:29105"/>
    </ligand>
</feature>
<feature type="binding site" evidence="1">
    <location>
        <position position="40"/>
    </location>
    <ligand>
        <name>Zn(2+)</name>
        <dbReference type="ChEBI" id="CHEBI:29105"/>
    </ligand>
</feature>
<feature type="binding site" evidence="1">
    <location>
        <position position="43"/>
    </location>
    <ligand>
        <name>Zn(2+)</name>
        <dbReference type="ChEBI" id="CHEBI:29105"/>
    </ligand>
</feature>
<feature type="helix" evidence="3">
    <location>
        <begin position="5"/>
        <end position="11"/>
    </location>
</feature>
<feature type="helix" evidence="3">
    <location>
        <begin position="17"/>
        <end position="19"/>
    </location>
</feature>
<feature type="strand" evidence="3">
    <location>
        <begin position="25"/>
        <end position="27"/>
    </location>
</feature>
<feature type="strand" evidence="3">
    <location>
        <begin position="31"/>
        <end position="34"/>
    </location>
</feature>
<feature type="turn" evidence="3">
    <location>
        <begin position="35"/>
        <end position="38"/>
    </location>
</feature>
<feature type="helix" evidence="3">
    <location>
        <begin position="41"/>
        <end position="48"/>
    </location>
</feature>
<feature type="turn" evidence="3">
    <location>
        <begin position="49"/>
        <end position="51"/>
    </location>
</feature>
<feature type="strand" evidence="3">
    <location>
        <begin position="53"/>
        <end position="55"/>
    </location>
</feature>
<name>RS14Z_ENTFA</name>
<gene>
    <name evidence="1" type="primary">rpsZ</name>
    <name evidence="1" type="synonym">rpsN-1</name>
    <name type="ordered locus">EF_0219</name>
</gene>
<proteinExistence type="evidence at protein level"/>
<dbReference type="EMBL" id="AE016830">
    <property type="protein sequence ID" value="AAO80088.1"/>
    <property type="molecule type" value="Genomic_DNA"/>
</dbReference>
<dbReference type="RefSeq" id="NP_814017.1">
    <property type="nucleotide sequence ID" value="NC_004668.1"/>
</dbReference>
<dbReference type="RefSeq" id="WP_002356214.1">
    <property type="nucleotide sequence ID" value="NZ_KE136524.1"/>
</dbReference>
<dbReference type="PDB" id="6WUA">
    <property type="method" value="EM"/>
    <property type="resolution" value="3.20 A"/>
    <property type="chains" value="n=2-61"/>
</dbReference>
<dbReference type="PDB" id="7P7Q">
    <property type="method" value="EM"/>
    <property type="resolution" value="2.40 A"/>
    <property type="chains" value="o=1-61"/>
</dbReference>
<dbReference type="PDB" id="7P7R">
    <property type="method" value="EM"/>
    <property type="resolution" value="2.90 A"/>
    <property type="chains" value="o=1-61"/>
</dbReference>
<dbReference type="PDBsum" id="6WUA"/>
<dbReference type="PDBsum" id="7P7Q"/>
<dbReference type="PDBsum" id="7P7R"/>
<dbReference type="EMDB" id="EMD-13241"/>
<dbReference type="EMDB" id="EMD-13242"/>
<dbReference type="SMR" id="Q839F1"/>
<dbReference type="STRING" id="226185.EF_0219"/>
<dbReference type="EnsemblBacteria" id="AAO80088">
    <property type="protein sequence ID" value="AAO80088"/>
    <property type="gene ID" value="EF_0219"/>
</dbReference>
<dbReference type="KEGG" id="efa:EF0219"/>
<dbReference type="PATRIC" id="fig|226185.45.peg.47"/>
<dbReference type="eggNOG" id="COG0199">
    <property type="taxonomic scope" value="Bacteria"/>
</dbReference>
<dbReference type="HOGENOM" id="CLU_139869_3_0_9"/>
<dbReference type="PRO" id="PR:Q839F1"/>
<dbReference type="Proteomes" id="UP000001415">
    <property type="component" value="Chromosome"/>
</dbReference>
<dbReference type="GO" id="GO:0015935">
    <property type="term" value="C:small ribosomal subunit"/>
    <property type="evidence" value="ECO:0007669"/>
    <property type="project" value="TreeGrafter"/>
</dbReference>
<dbReference type="GO" id="GO:0019843">
    <property type="term" value="F:rRNA binding"/>
    <property type="evidence" value="ECO:0007669"/>
    <property type="project" value="UniProtKB-UniRule"/>
</dbReference>
<dbReference type="GO" id="GO:0003735">
    <property type="term" value="F:structural constituent of ribosome"/>
    <property type="evidence" value="ECO:0007669"/>
    <property type="project" value="InterPro"/>
</dbReference>
<dbReference type="GO" id="GO:0008270">
    <property type="term" value="F:zinc ion binding"/>
    <property type="evidence" value="ECO:0007669"/>
    <property type="project" value="UniProtKB-UniRule"/>
</dbReference>
<dbReference type="GO" id="GO:0006412">
    <property type="term" value="P:translation"/>
    <property type="evidence" value="ECO:0007669"/>
    <property type="project" value="UniProtKB-UniRule"/>
</dbReference>
<dbReference type="FunFam" id="4.10.830.10:FF:000001">
    <property type="entry name" value="30S ribosomal protein S14 type Z"/>
    <property type="match status" value="1"/>
</dbReference>
<dbReference type="Gene3D" id="4.10.830.10">
    <property type="entry name" value="30s Ribosomal Protein S14, Chain N"/>
    <property type="match status" value="1"/>
</dbReference>
<dbReference type="HAMAP" id="MF_01364_B">
    <property type="entry name" value="Ribosomal_uS14_2_B"/>
    <property type="match status" value="1"/>
</dbReference>
<dbReference type="InterPro" id="IPR001209">
    <property type="entry name" value="Ribosomal_uS14"/>
</dbReference>
<dbReference type="InterPro" id="IPR023053">
    <property type="entry name" value="Ribosomal_uS14_bact"/>
</dbReference>
<dbReference type="InterPro" id="IPR018271">
    <property type="entry name" value="Ribosomal_uS14_CS"/>
</dbReference>
<dbReference type="InterPro" id="IPR043140">
    <property type="entry name" value="Ribosomal_uS14_sf"/>
</dbReference>
<dbReference type="NCBIfam" id="NF005974">
    <property type="entry name" value="PRK08061.1"/>
    <property type="match status" value="1"/>
</dbReference>
<dbReference type="PANTHER" id="PTHR19836">
    <property type="entry name" value="30S RIBOSOMAL PROTEIN S14"/>
    <property type="match status" value="1"/>
</dbReference>
<dbReference type="PANTHER" id="PTHR19836:SF26">
    <property type="entry name" value="SMALL RIBOSOMAL SUBUNIT PROTEIN US14B"/>
    <property type="match status" value="1"/>
</dbReference>
<dbReference type="Pfam" id="PF00253">
    <property type="entry name" value="Ribosomal_S14"/>
    <property type="match status" value="1"/>
</dbReference>
<dbReference type="SUPFAM" id="SSF57716">
    <property type="entry name" value="Glucocorticoid receptor-like (DNA-binding domain)"/>
    <property type="match status" value="1"/>
</dbReference>
<dbReference type="PROSITE" id="PS00527">
    <property type="entry name" value="RIBOSOMAL_S14"/>
    <property type="match status" value="1"/>
</dbReference>
<reference key="1">
    <citation type="journal article" date="2003" name="Science">
        <title>Role of mobile DNA in the evolution of vancomycin-resistant Enterococcus faecalis.</title>
        <authorList>
            <person name="Paulsen I.T."/>
            <person name="Banerjei L."/>
            <person name="Myers G.S.A."/>
            <person name="Nelson K.E."/>
            <person name="Seshadri R."/>
            <person name="Read T.D."/>
            <person name="Fouts D.E."/>
            <person name="Eisen J.A."/>
            <person name="Gill S.R."/>
            <person name="Heidelberg J.F."/>
            <person name="Tettelin H."/>
            <person name="Dodson R.J."/>
            <person name="Umayam L.A."/>
            <person name="Brinkac L.M."/>
            <person name="Beanan M.J."/>
            <person name="Daugherty S.C."/>
            <person name="DeBoy R.T."/>
            <person name="Durkin S.A."/>
            <person name="Kolonay J.F."/>
            <person name="Madupu R."/>
            <person name="Nelson W.C."/>
            <person name="Vamathevan J.J."/>
            <person name="Tran B."/>
            <person name="Upton J."/>
            <person name="Hansen T."/>
            <person name="Shetty J."/>
            <person name="Khouri H.M."/>
            <person name="Utterback T.R."/>
            <person name="Radune D."/>
            <person name="Ketchum K.A."/>
            <person name="Dougherty B.A."/>
            <person name="Fraser C.M."/>
        </authorList>
    </citation>
    <scope>NUCLEOTIDE SEQUENCE [LARGE SCALE GENOMIC DNA]</scope>
    <source>
        <strain>ATCC 700802 / V583</strain>
    </source>
</reference>
<keyword id="KW-0002">3D-structure</keyword>
<keyword id="KW-0479">Metal-binding</keyword>
<keyword id="KW-1185">Reference proteome</keyword>
<keyword id="KW-0687">Ribonucleoprotein</keyword>
<keyword id="KW-0689">Ribosomal protein</keyword>
<keyword id="KW-0694">RNA-binding</keyword>
<keyword id="KW-0699">rRNA-binding</keyword>
<keyword id="KW-0862">Zinc</keyword>
<evidence type="ECO:0000255" key="1">
    <source>
        <dbReference type="HAMAP-Rule" id="MF_01364"/>
    </source>
</evidence>
<evidence type="ECO:0000305" key="2"/>
<evidence type="ECO:0007829" key="3">
    <source>
        <dbReference type="PDB" id="6WUA"/>
    </source>
</evidence>